<accession>Q9C9Z2</accession>
<dbReference type="EMBL" id="AC012562">
    <property type="protein sequence ID" value="AAG51347.1"/>
    <property type="molecule type" value="Genomic_DNA"/>
</dbReference>
<dbReference type="EMBL" id="CP002686">
    <property type="protein sequence ID" value="AEE74657.1"/>
    <property type="molecule type" value="Genomic_DNA"/>
</dbReference>
<dbReference type="EMBL" id="AY081327">
    <property type="protein sequence ID" value="AAL91216.1"/>
    <property type="molecule type" value="mRNA"/>
</dbReference>
<dbReference type="EMBL" id="AY128826">
    <property type="protein sequence ID" value="AAM91226.1"/>
    <property type="molecule type" value="mRNA"/>
</dbReference>
<dbReference type="RefSeq" id="NP_187476.1">
    <property type="nucleotide sequence ID" value="NM_111698.4"/>
</dbReference>
<dbReference type="FunCoup" id="Q9C9Z2">
    <property type="interactions" value="507"/>
</dbReference>
<dbReference type="STRING" id="3702.Q9C9Z2"/>
<dbReference type="iPTMnet" id="Q9C9Z2"/>
<dbReference type="PaxDb" id="3702-AT3G08640.1"/>
<dbReference type="ProteomicsDB" id="234669"/>
<dbReference type="EnsemblPlants" id="AT3G08640.1">
    <property type="protein sequence ID" value="AT3G08640.1"/>
    <property type="gene ID" value="AT3G08640"/>
</dbReference>
<dbReference type="GeneID" id="820011"/>
<dbReference type="Gramene" id="AT3G08640.1">
    <property type="protein sequence ID" value="AT3G08640.1"/>
    <property type="gene ID" value="AT3G08640"/>
</dbReference>
<dbReference type="KEGG" id="ath:AT3G08640"/>
<dbReference type="Araport" id="AT3G08640"/>
<dbReference type="TAIR" id="AT3G08640">
    <property type="gene designation" value="RER3"/>
</dbReference>
<dbReference type="eggNOG" id="ENOG502QRRA">
    <property type="taxonomic scope" value="Eukaryota"/>
</dbReference>
<dbReference type="HOGENOM" id="CLU_036961_0_0_1"/>
<dbReference type="InParanoid" id="Q9C9Z2"/>
<dbReference type="OMA" id="RCANNVA"/>
<dbReference type="PhylomeDB" id="Q9C9Z2"/>
<dbReference type="PRO" id="PR:Q9C9Z2"/>
<dbReference type="Proteomes" id="UP000006548">
    <property type="component" value="Chromosome 3"/>
</dbReference>
<dbReference type="ExpressionAtlas" id="Q9C9Z2">
    <property type="expression patterns" value="baseline and differential"/>
</dbReference>
<dbReference type="GO" id="GO:0009507">
    <property type="term" value="C:chloroplast"/>
    <property type="evidence" value="ECO:0000314"/>
    <property type="project" value="TAIR"/>
</dbReference>
<dbReference type="GO" id="GO:0009941">
    <property type="term" value="C:chloroplast envelope"/>
    <property type="evidence" value="ECO:0007005"/>
    <property type="project" value="TAIR"/>
</dbReference>
<dbReference type="GO" id="GO:0031969">
    <property type="term" value="C:chloroplast membrane"/>
    <property type="evidence" value="ECO:0007669"/>
    <property type="project" value="UniProtKB-SubCell"/>
</dbReference>
<dbReference type="GO" id="GO:0005829">
    <property type="term" value="C:cytosol"/>
    <property type="evidence" value="ECO:0007005"/>
    <property type="project" value="TAIR"/>
</dbReference>
<dbReference type="GO" id="GO:0009536">
    <property type="term" value="C:plastid"/>
    <property type="evidence" value="ECO:0007005"/>
    <property type="project" value="TAIR"/>
</dbReference>
<dbReference type="GO" id="GO:0009793">
    <property type="term" value="P:embryo development ending in seed dormancy"/>
    <property type="evidence" value="ECO:0000315"/>
    <property type="project" value="TAIR"/>
</dbReference>
<dbReference type="GO" id="GO:0048366">
    <property type="term" value="P:leaf development"/>
    <property type="evidence" value="ECO:0000315"/>
    <property type="project" value="TAIR"/>
</dbReference>
<dbReference type="GO" id="GO:0009648">
    <property type="term" value="P:photoperiodism"/>
    <property type="evidence" value="ECO:0000315"/>
    <property type="project" value="TAIR"/>
</dbReference>
<dbReference type="GO" id="GO:0000302">
    <property type="term" value="P:response to reactive oxygen species"/>
    <property type="evidence" value="ECO:0000315"/>
    <property type="project" value="TAIR"/>
</dbReference>
<dbReference type="InterPro" id="IPR021825">
    <property type="entry name" value="RETICULATA-related"/>
</dbReference>
<dbReference type="PANTHER" id="PTHR31620">
    <property type="entry name" value="PROTEIN RETICULATA-RELATED 2, CHLOROPLASTIC-RELATED"/>
    <property type="match status" value="1"/>
</dbReference>
<dbReference type="PANTHER" id="PTHR31620:SF15">
    <property type="entry name" value="PROTEIN RETICULATA-RELATED 2, CHLOROPLASTIC-RELATED"/>
    <property type="match status" value="1"/>
</dbReference>
<dbReference type="Pfam" id="PF11891">
    <property type="entry name" value="RETICULATA-like"/>
    <property type="match status" value="1"/>
</dbReference>
<sequence length="337" mass="35252">MAAMAAKLQLSAKSDQSSVRLPRVINLSRDPTTRVSFPRNGSVCSLHTNFSSPHLAKPCAGGGGGGSTGNNGGGSGSGGGGGGFGGSGGEASEESSPWGPIGLFIQGWRSRVAADPQFPFKVLMEEIVGLSACVLGDMASRPNFGLNELDFVFSTLVVGSILNFVLMYMLAPTAATLGSSQTLPGIFRNCPSSHMFEQGSFTVMNRFGTLVYKGMVFASVGLAAGLVGTAISNGLIMLRKKMDPSFETPNKPPPTVLNSLTWATHMGVSANARYQTLNGIEFLLAKVLPPLVFKTSVIVLRCANNVAGGMSFVLLARMTGSQSVEEKTEISEKEKDD</sequence>
<protein>
    <recommendedName>
        <fullName evidence="4">Protein RETICULATA-RELATED 3, chloroplastic</fullName>
    </recommendedName>
</protein>
<name>RER3_ARATH</name>
<feature type="transit peptide" description="Chloroplast" evidence="1">
    <location>
        <begin position="1"/>
        <end position="59"/>
    </location>
</feature>
<feature type="chain" id="PRO_0000433442" description="Protein RETICULATA-RELATED 3, chloroplastic" evidence="1">
    <location>
        <begin position="60"/>
        <end position="337"/>
    </location>
</feature>
<feature type="transmembrane region" description="Helical" evidence="1">
    <location>
        <begin position="151"/>
        <end position="171"/>
    </location>
</feature>
<feature type="transmembrane region" description="Helical" evidence="1">
    <location>
        <begin position="216"/>
        <end position="236"/>
    </location>
</feature>
<feature type="region of interest" description="Disordered" evidence="2">
    <location>
        <begin position="70"/>
        <end position="96"/>
    </location>
</feature>
<feature type="compositionally biased region" description="Gly residues" evidence="2">
    <location>
        <begin position="70"/>
        <end position="89"/>
    </location>
</feature>
<feature type="mutagenesis site" description="In rer3-1; pale interveinal phenotype." evidence="3">
    <original>G</original>
    <variation>E</variation>
    <location>
        <position position="129"/>
    </location>
</feature>
<feature type="mutagenesis site" description="In rer3-2; pale interveinal phenotype." evidence="3">
    <original>G</original>
    <variation>S</variation>
    <location>
        <position position="228"/>
    </location>
</feature>
<evidence type="ECO:0000255" key="1"/>
<evidence type="ECO:0000256" key="2">
    <source>
        <dbReference type="SAM" id="MobiDB-lite"/>
    </source>
</evidence>
<evidence type="ECO:0000269" key="3">
    <source>
    </source>
</evidence>
<evidence type="ECO:0000303" key="4">
    <source>
    </source>
</evidence>
<evidence type="ECO:0000305" key="5"/>
<evidence type="ECO:0000305" key="6">
    <source>
    </source>
</evidence>
<evidence type="ECO:0000312" key="7">
    <source>
        <dbReference type="Araport" id="AT3G08640"/>
    </source>
</evidence>
<evidence type="ECO:0000312" key="8">
    <source>
        <dbReference type="EMBL" id="AAG51347.1"/>
    </source>
</evidence>
<comment type="function">
    <text evidence="6">May play a role in leaf development. Required for leaf mesophyll cell division in the early stages of leaf organogenesis.</text>
</comment>
<comment type="subcellular location">
    <subcellularLocation>
        <location evidence="6">Plastid</location>
        <location evidence="6">Chloroplast membrane</location>
        <topology evidence="1">Multi-pass membrane protein</topology>
    </subcellularLocation>
</comment>
<comment type="tissue specificity">
    <text evidence="3">Expressed in root meristem, root vasculature, distal region of young leaf primordia, leaf bundle sheath cells, hydathodes and pollen grains.</text>
</comment>
<comment type="developmental stage">
    <text evidence="3">During embryo development, expressed from the heart stage onwards and restricted to the adaxial side of the cotyledons in mature embryos.</text>
</comment>
<comment type="disruption phenotype">
    <text evidence="3">Defects in embryo development, seedling germination and early growth. Pale interveinal phenotype due to marked reduction in the density of mesophyll cells in interveinal regions of leaves.</text>
</comment>
<comment type="similarity">
    <text evidence="5">Belongs to the RETICULATA family.</text>
</comment>
<reference key="1">
    <citation type="journal article" date="2000" name="Nature">
        <title>Sequence and analysis of chromosome 3 of the plant Arabidopsis thaliana.</title>
        <authorList>
            <person name="Salanoubat M."/>
            <person name="Lemcke K."/>
            <person name="Rieger M."/>
            <person name="Ansorge W."/>
            <person name="Unseld M."/>
            <person name="Fartmann B."/>
            <person name="Valle G."/>
            <person name="Bloecker H."/>
            <person name="Perez-Alonso M."/>
            <person name="Obermaier B."/>
            <person name="Delseny M."/>
            <person name="Boutry M."/>
            <person name="Grivell L.A."/>
            <person name="Mache R."/>
            <person name="Puigdomenech P."/>
            <person name="De Simone V."/>
            <person name="Choisne N."/>
            <person name="Artiguenave F."/>
            <person name="Robert C."/>
            <person name="Brottier P."/>
            <person name="Wincker P."/>
            <person name="Cattolico L."/>
            <person name="Weissenbach J."/>
            <person name="Saurin W."/>
            <person name="Quetier F."/>
            <person name="Schaefer M."/>
            <person name="Mueller-Auer S."/>
            <person name="Gabel C."/>
            <person name="Fuchs M."/>
            <person name="Benes V."/>
            <person name="Wurmbach E."/>
            <person name="Drzonek H."/>
            <person name="Erfle H."/>
            <person name="Jordan N."/>
            <person name="Bangert S."/>
            <person name="Wiedelmann R."/>
            <person name="Kranz H."/>
            <person name="Voss H."/>
            <person name="Holland R."/>
            <person name="Brandt P."/>
            <person name="Nyakatura G."/>
            <person name="Vezzi A."/>
            <person name="D'Angelo M."/>
            <person name="Pallavicini A."/>
            <person name="Toppo S."/>
            <person name="Simionati B."/>
            <person name="Conrad A."/>
            <person name="Hornischer K."/>
            <person name="Kauer G."/>
            <person name="Loehnert T.-H."/>
            <person name="Nordsiek G."/>
            <person name="Reichelt J."/>
            <person name="Scharfe M."/>
            <person name="Schoen O."/>
            <person name="Bargues M."/>
            <person name="Terol J."/>
            <person name="Climent J."/>
            <person name="Navarro P."/>
            <person name="Collado C."/>
            <person name="Perez-Perez A."/>
            <person name="Ottenwaelder B."/>
            <person name="Duchemin D."/>
            <person name="Cooke R."/>
            <person name="Laudie M."/>
            <person name="Berger-Llauro C."/>
            <person name="Purnelle B."/>
            <person name="Masuy D."/>
            <person name="de Haan M."/>
            <person name="Maarse A.C."/>
            <person name="Alcaraz J.-P."/>
            <person name="Cottet A."/>
            <person name="Casacuberta E."/>
            <person name="Monfort A."/>
            <person name="Argiriou A."/>
            <person name="Flores M."/>
            <person name="Liguori R."/>
            <person name="Vitale D."/>
            <person name="Mannhaupt G."/>
            <person name="Haase D."/>
            <person name="Schoof H."/>
            <person name="Rudd S."/>
            <person name="Zaccaria P."/>
            <person name="Mewes H.-W."/>
            <person name="Mayer K.F.X."/>
            <person name="Kaul S."/>
            <person name="Town C.D."/>
            <person name="Koo H.L."/>
            <person name="Tallon L.J."/>
            <person name="Jenkins J."/>
            <person name="Rooney T."/>
            <person name="Rizzo M."/>
            <person name="Walts A."/>
            <person name="Utterback T."/>
            <person name="Fujii C.Y."/>
            <person name="Shea T.P."/>
            <person name="Creasy T.H."/>
            <person name="Haas B."/>
            <person name="Maiti R."/>
            <person name="Wu D."/>
            <person name="Peterson J."/>
            <person name="Van Aken S."/>
            <person name="Pai G."/>
            <person name="Militscher J."/>
            <person name="Sellers P."/>
            <person name="Gill J.E."/>
            <person name="Feldblyum T.V."/>
            <person name="Preuss D."/>
            <person name="Lin X."/>
            <person name="Nierman W.C."/>
            <person name="Salzberg S.L."/>
            <person name="White O."/>
            <person name="Venter J.C."/>
            <person name="Fraser C.M."/>
            <person name="Kaneko T."/>
            <person name="Nakamura Y."/>
            <person name="Sato S."/>
            <person name="Kato T."/>
            <person name="Asamizu E."/>
            <person name="Sasamoto S."/>
            <person name="Kimura T."/>
            <person name="Idesawa K."/>
            <person name="Kawashima K."/>
            <person name="Kishida Y."/>
            <person name="Kiyokawa C."/>
            <person name="Kohara M."/>
            <person name="Matsumoto M."/>
            <person name="Matsuno A."/>
            <person name="Muraki A."/>
            <person name="Nakayama S."/>
            <person name="Nakazaki N."/>
            <person name="Shinpo S."/>
            <person name="Takeuchi C."/>
            <person name="Wada T."/>
            <person name="Watanabe A."/>
            <person name="Yamada M."/>
            <person name="Yasuda M."/>
            <person name="Tabata S."/>
        </authorList>
    </citation>
    <scope>NUCLEOTIDE SEQUENCE [LARGE SCALE GENOMIC DNA]</scope>
    <source>
        <strain>cv. Columbia</strain>
    </source>
</reference>
<reference key="2">
    <citation type="journal article" date="2017" name="Plant J.">
        <title>Araport11: a complete reannotation of the Arabidopsis thaliana reference genome.</title>
        <authorList>
            <person name="Cheng C.Y."/>
            <person name="Krishnakumar V."/>
            <person name="Chan A.P."/>
            <person name="Thibaud-Nissen F."/>
            <person name="Schobel S."/>
            <person name="Town C.D."/>
        </authorList>
    </citation>
    <scope>GENOME REANNOTATION</scope>
    <source>
        <strain>cv. Columbia</strain>
    </source>
</reference>
<reference key="3">
    <citation type="journal article" date="2003" name="Science">
        <title>Empirical analysis of transcriptional activity in the Arabidopsis genome.</title>
        <authorList>
            <person name="Yamada K."/>
            <person name="Lim J."/>
            <person name="Dale J.M."/>
            <person name="Chen H."/>
            <person name="Shinn P."/>
            <person name="Palm C.J."/>
            <person name="Southwick A.M."/>
            <person name="Wu H.C."/>
            <person name="Kim C.J."/>
            <person name="Nguyen M."/>
            <person name="Pham P.K."/>
            <person name="Cheuk R.F."/>
            <person name="Karlin-Newmann G."/>
            <person name="Liu S.X."/>
            <person name="Lam B."/>
            <person name="Sakano H."/>
            <person name="Wu T."/>
            <person name="Yu G."/>
            <person name="Miranda M."/>
            <person name="Quach H.L."/>
            <person name="Tripp M."/>
            <person name="Chang C.H."/>
            <person name="Lee J.M."/>
            <person name="Toriumi M.J."/>
            <person name="Chan M.M."/>
            <person name="Tang C.C."/>
            <person name="Onodera C.S."/>
            <person name="Deng J.M."/>
            <person name="Akiyama K."/>
            <person name="Ansari Y."/>
            <person name="Arakawa T."/>
            <person name="Banh J."/>
            <person name="Banno F."/>
            <person name="Bowser L."/>
            <person name="Brooks S.Y."/>
            <person name="Carninci P."/>
            <person name="Chao Q."/>
            <person name="Choy N."/>
            <person name="Enju A."/>
            <person name="Goldsmith A.D."/>
            <person name="Gurjal M."/>
            <person name="Hansen N.F."/>
            <person name="Hayashizaki Y."/>
            <person name="Johnson-Hopson C."/>
            <person name="Hsuan V.W."/>
            <person name="Iida K."/>
            <person name="Karnes M."/>
            <person name="Khan S."/>
            <person name="Koesema E."/>
            <person name="Ishida J."/>
            <person name="Jiang P.X."/>
            <person name="Jones T."/>
            <person name="Kawai J."/>
            <person name="Kamiya A."/>
            <person name="Meyers C."/>
            <person name="Nakajima M."/>
            <person name="Narusaka M."/>
            <person name="Seki M."/>
            <person name="Sakurai T."/>
            <person name="Satou M."/>
            <person name="Tamse R."/>
            <person name="Vaysberg M."/>
            <person name="Wallender E.K."/>
            <person name="Wong C."/>
            <person name="Yamamura Y."/>
            <person name="Yuan S."/>
            <person name="Shinozaki K."/>
            <person name="Davis R.W."/>
            <person name="Theologis A."/>
            <person name="Ecker J.R."/>
        </authorList>
    </citation>
    <scope>NUCLEOTIDE SEQUENCE [LARGE SCALE MRNA]</scope>
    <source>
        <strain>cv. Columbia</strain>
    </source>
</reference>
<reference key="4">
    <citation type="journal article" date="2013" name="Plant Physiol.">
        <title>Functional redundancy and divergence within the Arabidopsis RETICULATA-RELATED gene family.</title>
        <authorList>
            <person name="Perez-Perez J.M."/>
            <person name="Esteve-Bruna D."/>
            <person name="Gonzalez-Bayon R."/>
            <person name="Kangasjarvi S."/>
            <person name="Caldana C."/>
            <person name="Hannah M.A."/>
            <person name="Willmitzer L."/>
            <person name="Ponce M.R."/>
            <person name="Micol J.L."/>
        </authorList>
    </citation>
    <scope>FUNCTION</scope>
    <scope>SUBCELLULAR LOCATION</scope>
    <scope>TISSUE SPECIFICITY</scope>
    <scope>DEVELOPMENTAL STAGE</scope>
    <scope>GENE FAMILY</scope>
    <scope>NOMENCLATURE</scope>
    <scope>DISRUPTION PHENOTYPE</scope>
    <scope>MUTAGENESIS OF GLY-129 AND GLY-228</scope>
</reference>
<gene>
    <name evidence="4" type="primary">RER3</name>
    <name evidence="7" type="ordered locus">At3g08640</name>
    <name evidence="8" type="ORF">F17O14.11</name>
</gene>
<proteinExistence type="evidence at protein level"/>
<keyword id="KW-0150">Chloroplast</keyword>
<keyword id="KW-0217">Developmental protein</keyword>
<keyword id="KW-0472">Membrane</keyword>
<keyword id="KW-0934">Plastid</keyword>
<keyword id="KW-1185">Reference proteome</keyword>
<keyword id="KW-0809">Transit peptide</keyword>
<keyword id="KW-0812">Transmembrane</keyword>
<keyword id="KW-1133">Transmembrane helix</keyword>
<organism>
    <name type="scientific">Arabidopsis thaliana</name>
    <name type="common">Mouse-ear cress</name>
    <dbReference type="NCBI Taxonomy" id="3702"/>
    <lineage>
        <taxon>Eukaryota</taxon>
        <taxon>Viridiplantae</taxon>
        <taxon>Streptophyta</taxon>
        <taxon>Embryophyta</taxon>
        <taxon>Tracheophyta</taxon>
        <taxon>Spermatophyta</taxon>
        <taxon>Magnoliopsida</taxon>
        <taxon>eudicotyledons</taxon>
        <taxon>Gunneridae</taxon>
        <taxon>Pentapetalae</taxon>
        <taxon>rosids</taxon>
        <taxon>malvids</taxon>
        <taxon>Brassicales</taxon>
        <taxon>Brassicaceae</taxon>
        <taxon>Camelineae</taxon>
        <taxon>Arabidopsis</taxon>
    </lineage>
</organism>